<evidence type="ECO:0000255" key="1">
    <source>
        <dbReference type="HAMAP-Rule" id="MF_01374"/>
    </source>
</evidence>
<organism>
    <name type="scientific">Acaryochloris marina (strain MBIC 11017)</name>
    <dbReference type="NCBI Taxonomy" id="329726"/>
    <lineage>
        <taxon>Bacteria</taxon>
        <taxon>Bacillati</taxon>
        <taxon>Cyanobacteriota</taxon>
        <taxon>Cyanophyceae</taxon>
        <taxon>Acaryochloridales</taxon>
        <taxon>Acaryochloridaceae</taxon>
        <taxon>Acaryochloris</taxon>
    </lineage>
</organism>
<protein>
    <recommendedName>
        <fullName evidence="1">Hydroxyacylglutathione hydrolase</fullName>
        <ecNumber evidence="1">3.1.2.6</ecNumber>
    </recommendedName>
    <alternativeName>
        <fullName evidence="1">Glyoxalase II</fullName>
        <shortName evidence="1">Glx II</shortName>
    </alternativeName>
</protein>
<gene>
    <name evidence="1" type="primary">gloB</name>
    <name type="ordered locus">AM1_5788</name>
</gene>
<name>GLO2_ACAM1</name>
<accession>B0BZI8</accession>
<sequence length="257" mass="29006">MQIHRLPAFSDNYIFVLHDPGQNIAAVVDPADPQPVLKKLAELGAELVAIFNTHHHSDHVGGNRTLLQAFPNTVVYGGEQDRGRIPGQQHFLKEGDQVSFAHRRAEVYFVPGHTRAHIAYYFPPTTGEEWGELFCGDTLFAGGCGRLFEGTPAQMVDSLSKLRNLPETTRVWCAHEYTLKNLQFALTVDSDNSHLKNRFKQVQNARNLSQPTVPSDIGLEKQTNPFLRWDQPHLIIHTKSNTPVQCFARLRGMKDQF</sequence>
<dbReference type="EC" id="3.1.2.6" evidence="1"/>
<dbReference type="EMBL" id="CP000828">
    <property type="protein sequence ID" value="ABW30733.1"/>
    <property type="molecule type" value="Genomic_DNA"/>
</dbReference>
<dbReference type="RefSeq" id="WP_012165947.1">
    <property type="nucleotide sequence ID" value="NC_009925.1"/>
</dbReference>
<dbReference type="SMR" id="B0BZI8"/>
<dbReference type="STRING" id="329726.AM1_5788"/>
<dbReference type="KEGG" id="amr:AM1_5788"/>
<dbReference type="eggNOG" id="COG0491">
    <property type="taxonomic scope" value="Bacteria"/>
</dbReference>
<dbReference type="HOGENOM" id="CLU_030571_4_1_3"/>
<dbReference type="OrthoDB" id="9802897at2"/>
<dbReference type="UniPathway" id="UPA00619">
    <property type="reaction ID" value="UER00676"/>
</dbReference>
<dbReference type="Proteomes" id="UP000000268">
    <property type="component" value="Chromosome"/>
</dbReference>
<dbReference type="GO" id="GO:0004416">
    <property type="term" value="F:hydroxyacylglutathione hydrolase activity"/>
    <property type="evidence" value="ECO:0007669"/>
    <property type="project" value="UniProtKB-UniRule"/>
</dbReference>
<dbReference type="GO" id="GO:0046872">
    <property type="term" value="F:metal ion binding"/>
    <property type="evidence" value="ECO:0007669"/>
    <property type="project" value="UniProtKB-KW"/>
</dbReference>
<dbReference type="GO" id="GO:0019243">
    <property type="term" value="P:methylglyoxal catabolic process to D-lactate via S-lactoyl-glutathione"/>
    <property type="evidence" value="ECO:0007669"/>
    <property type="project" value="InterPro"/>
</dbReference>
<dbReference type="CDD" id="cd07723">
    <property type="entry name" value="hydroxyacylglutathione_hydrolase_MBL-fold"/>
    <property type="match status" value="1"/>
</dbReference>
<dbReference type="Gene3D" id="3.60.15.10">
    <property type="entry name" value="Ribonuclease Z/Hydroxyacylglutathione hydrolase-like"/>
    <property type="match status" value="1"/>
</dbReference>
<dbReference type="HAMAP" id="MF_01374">
    <property type="entry name" value="Glyoxalase_2"/>
    <property type="match status" value="1"/>
</dbReference>
<dbReference type="InterPro" id="IPR035680">
    <property type="entry name" value="Clx_II_MBL"/>
</dbReference>
<dbReference type="InterPro" id="IPR050110">
    <property type="entry name" value="Glyoxalase_II_hydrolase"/>
</dbReference>
<dbReference type="InterPro" id="IPR032282">
    <property type="entry name" value="HAGH_C"/>
</dbReference>
<dbReference type="InterPro" id="IPR017782">
    <property type="entry name" value="Hydroxyacylglutathione_Hdrlase"/>
</dbReference>
<dbReference type="InterPro" id="IPR001279">
    <property type="entry name" value="Metallo-B-lactamas"/>
</dbReference>
<dbReference type="InterPro" id="IPR036866">
    <property type="entry name" value="RibonucZ/Hydroxyglut_hydro"/>
</dbReference>
<dbReference type="NCBIfam" id="TIGR03413">
    <property type="entry name" value="GSH_gloB"/>
    <property type="match status" value="1"/>
</dbReference>
<dbReference type="PANTHER" id="PTHR43705">
    <property type="entry name" value="HYDROXYACYLGLUTATHIONE HYDROLASE"/>
    <property type="match status" value="1"/>
</dbReference>
<dbReference type="PANTHER" id="PTHR43705:SF1">
    <property type="entry name" value="HYDROXYACYLGLUTATHIONE HYDROLASE GLOB"/>
    <property type="match status" value="1"/>
</dbReference>
<dbReference type="Pfam" id="PF16123">
    <property type="entry name" value="HAGH_C"/>
    <property type="match status" value="1"/>
</dbReference>
<dbReference type="Pfam" id="PF00753">
    <property type="entry name" value="Lactamase_B"/>
    <property type="match status" value="1"/>
</dbReference>
<dbReference type="PIRSF" id="PIRSF005457">
    <property type="entry name" value="Glx"/>
    <property type="match status" value="1"/>
</dbReference>
<dbReference type="SMART" id="SM00849">
    <property type="entry name" value="Lactamase_B"/>
    <property type="match status" value="1"/>
</dbReference>
<dbReference type="SUPFAM" id="SSF56281">
    <property type="entry name" value="Metallo-hydrolase/oxidoreductase"/>
    <property type="match status" value="1"/>
</dbReference>
<reference key="1">
    <citation type="journal article" date="2008" name="Proc. Natl. Acad. Sci. U.S.A.">
        <title>Niche adaptation and genome expansion in the chlorophyll d-producing cyanobacterium Acaryochloris marina.</title>
        <authorList>
            <person name="Swingley W.D."/>
            <person name="Chen M."/>
            <person name="Cheung P.C."/>
            <person name="Conrad A.L."/>
            <person name="Dejesa L.C."/>
            <person name="Hao J."/>
            <person name="Honchak B.M."/>
            <person name="Karbach L.E."/>
            <person name="Kurdoglu A."/>
            <person name="Lahiri S."/>
            <person name="Mastrian S.D."/>
            <person name="Miyashita H."/>
            <person name="Page L."/>
            <person name="Ramakrishna P."/>
            <person name="Satoh S."/>
            <person name="Sattley W.M."/>
            <person name="Shimada Y."/>
            <person name="Taylor H.L."/>
            <person name="Tomo T."/>
            <person name="Tsuchiya T."/>
            <person name="Wang Z.T."/>
            <person name="Raymond J."/>
            <person name="Mimuro M."/>
            <person name="Blankenship R.E."/>
            <person name="Touchman J.W."/>
        </authorList>
    </citation>
    <scope>NUCLEOTIDE SEQUENCE [LARGE SCALE GENOMIC DNA]</scope>
    <source>
        <strain>MBIC 11017</strain>
    </source>
</reference>
<keyword id="KW-0378">Hydrolase</keyword>
<keyword id="KW-0479">Metal-binding</keyword>
<keyword id="KW-1185">Reference proteome</keyword>
<keyword id="KW-0862">Zinc</keyword>
<proteinExistence type="inferred from homology"/>
<comment type="function">
    <text evidence="1">Thiolesterase that catalyzes the hydrolysis of S-D-lactoyl-glutathione to form glutathione and D-lactic acid.</text>
</comment>
<comment type="catalytic activity">
    <reaction evidence="1">
        <text>an S-(2-hydroxyacyl)glutathione + H2O = a 2-hydroxy carboxylate + glutathione + H(+)</text>
        <dbReference type="Rhea" id="RHEA:21864"/>
        <dbReference type="ChEBI" id="CHEBI:15377"/>
        <dbReference type="ChEBI" id="CHEBI:15378"/>
        <dbReference type="ChEBI" id="CHEBI:57925"/>
        <dbReference type="ChEBI" id="CHEBI:58896"/>
        <dbReference type="ChEBI" id="CHEBI:71261"/>
        <dbReference type="EC" id="3.1.2.6"/>
    </reaction>
</comment>
<comment type="cofactor">
    <cofactor evidence="1">
        <name>Zn(2+)</name>
        <dbReference type="ChEBI" id="CHEBI:29105"/>
    </cofactor>
    <text evidence="1">Binds 2 Zn(2+) ions per subunit.</text>
</comment>
<comment type="pathway">
    <text evidence="1">Secondary metabolite metabolism; methylglyoxal degradation; (R)-lactate from methylglyoxal: step 2/2.</text>
</comment>
<comment type="subunit">
    <text evidence="1">Monomer.</text>
</comment>
<comment type="similarity">
    <text evidence="1">Belongs to the metallo-beta-lactamase superfamily. Glyoxalase II family.</text>
</comment>
<feature type="chain" id="PRO_1000087274" description="Hydroxyacylglutathione hydrolase">
    <location>
        <begin position="1"/>
        <end position="257"/>
    </location>
</feature>
<feature type="binding site" evidence="1">
    <location>
        <position position="54"/>
    </location>
    <ligand>
        <name>Zn(2+)</name>
        <dbReference type="ChEBI" id="CHEBI:29105"/>
        <label>1</label>
    </ligand>
</feature>
<feature type="binding site" evidence="1">
    <location>
        <position position="56"/>
    </location>
    <ligand>
        <name>Zn(2+)</name>
        <dbReference type="ChEBI" id="CHEBI:29105"/>
        <label>1</label>
    </ligand>
</feature>
<feature type="binding site" evidence="1">
    <location>
        <position position="58"/>
    </location>
    <ligand>
        <name>Zn(2+)</name>
        <dbReference type="ChEBI" id="CHEBI:29105"/>
        <label>2</label>
    </ligand>
</feature>
<feature type="binding site" evidence="1">
    <location>
        <position position="59"/>
    </location>
    <ligand>
        <name>Zn(2+)</name>
        <dbReference type="ChEBI" id="CHEBI:29105"/>
        <label>2</label>
    </ligand>
</feature>
<feature type="binding site" evidence="1">
    <location>
        <position position="113"/>
    </location>
    <ligand>
        <name>Zn(2+)</name>
        <dbReference type="ChEBI" id="CHEBI:29105"/>
        <label>1</label>
    </ligand>
</feature>
<feature type="binding site" evidence="1">
    <location>
        <position position="137"/>
    </location>
    <ligand>
        <name>Zn(2+)</name>
        <dbReference type="ChEBI" id="CHEBI:29105"/>
        <label>1</label>
    </ligand>
</feature>
<feature type="binding site" evidence="1">
    <location>
        <position position="137"/>
    </location>
    <ligand>
        <name>Zn(2+)</name>
        <dbReference type="ChEBI" id="CHEBI:29105"/>
        <label>2</label>
    </ligand>
</feature>
<feature type="binding site" evidence="1">
    <location>
        <position position="175"/>
    </location>
    <ligand>
        <name>Zn(2+)</name>
        <dbReference type="ChEBI" id="CHEBI:29105"/>
        <label>2</label>
    </ligand>
</feature>